<organism>
    <name type="scientific">Synechococcus sp. (strain WH7803)</name>
    <dbReference type="NCBI Taxonomy" id="32051"/>
    <lineage>
        <taxon>Bacteria</taxon>
        <taxon>Bacillati</taxon>
        <taxon>Cyanobacteriota</taxon>
        <taxon>Cyanophyceae</taxon>
        <taxon>Synechococcales</taxon>
        <taxon>Synechococcaceae</taxon>
        <taxon>Synechococcus</taxon>
    </lineage>
</organism>
<accession>A5GI02</accession>
<name>SECA_SYNPW</name>
<keyword id="KW-0067">ATP-binding</keyword>
<keyword id="KW-0997">Cell inner membrane</keyword>
<keyword id="KW-1003">Cell membrane</keyword>
<keyword id="KW-0963">Cytoplasm</keyword>
<keyword id="KW-0472">Membrane</keyword>
<keyword id="KW-0547">Nucleotide-binding</keyword>
<keyword id="KW-0653">Protein transport</keyword>
<keyword id="KW-1185">Reference proteome</keyword>
<keyword id="KW-0793">Thylakoid</keyword>
<keyword id="KW-1278">Translocase</keyword>
<keyword id="KW-0811">Translocation</keyword>
<keyword id="KW-0813">Transport</keyword>
<gene>
    <name evidence="1" type="primary">secA</name>
    <name type="ordered locus">SynWH7803_0141</name>
</gene>
<protein>
    <recommendedName>
        <fullName evidence="1">Protein translocase subunit SecA</fullName>
        <ecNumber evidence="1">7.4.2.8</ecNumber>
    </recommendedName>
</protein>
<dbReference type="EC" id="7.4.2.8" evidence="1"/>
<dbReference type="EMBL" id="CT971583">
    <property type="protein sequence ID" value="CAK22567.1"/>
    <property type="molecule type" value="Genomic_DNA"/>
</dbReference>
<dbReference type="SMR" id="A5GI02"/>
<dbReference type="STRING" id="32051.SynWH7803_0141"/>
<dbReference type="KEGG" id="syx:SynWH7803_0141"/>
<dbReference type="eggNOG" id="COG0653">
    <property type="taxonomic scope" value="Bacteria"/>
</dbReference>
<dbReference type="HOGENOM" id="CLU_005314_3_0_3"/>
<dbReference type="OrthoDB" id="9805579at2"/>
<dbReference type="Proteomes" id="UP000001566">
    <property type="component" value="Chromosome"/>
</dbReference>
<dbReference type="GO" id="GO:0031522">
    <property type="term" value="C:cell envelope Sec protein transport complex"/>
    <property type="evidence" value="ECO:0007669"/>
    <property type="project" value="TreeGrafter"/>
</dbReference>
<dbReference type="GO" id="GO:0005829">
    <property type="term" value="C:cytosol"/>
    <property type="evidence" value="ECO:0007669"/>
    <property type="project" value="TreeGrafter"/>
</dbReference>
<dbReference type="GO" id="GO:0031676">
    <property type="term" value="C:plasma membrane-derived thylakoid membrane"/>
    <property type="evidence" value="ECO:0007669"/>
    <property type="project" value="UniProtKB-SubCell"/>
</dbReference>
<dbReference type="GO" id="GO:0005524">
    <property type="term" value="F:ATP binding"/>
    <property type="evidence" value="ECO:0007669"/>
    <property type="project" value="UniProtKB-UniRule"/>
</dbReference>
<dbReference type="GO" id="GO:0008564">
    <property type="term" value="F:protein-exporting ATPase activity"/>
    <property type="evidence" value="ECO:0007669"/>
    <property type="project" value="UniProtKB-EC"/>
</dbReference>
<dbReference type="GO" id="GO:0065002">
    <property type="term" value="P:intracellular protein transmembrane transport"/>
    <property type="evidence" value="ECO:0007669"/>
    <property type="project" value="UniProtKB-UniRule"/>
</dbReference>
<dbReference type="GO" id="GO:0017038">
    <property type="term" value="P:protein import"/>
    <property type="evidence" value="ECO:0007669"/>
    <property type="project" value="InterPro"/>
</dbReference>
<dbReference type="GO" id="GO:0006605">
    <property type="term" value="P:protein targeting"/>
    <property type="evidence" value="ECO:0007669"/>
    <property type="project" value="UniProtKB-UniRule"/>
</dbReference>
<dbReference type="GO" id="GO:0043952">
    <property type="term" value="P:protein transport by the Sec complex"/>
    <property type="evidence" value="ECO:0007669"/>
    <property type="project" value="TreeGrafter"/>
</dbReference>
<dbReference type="CDD" id="cd17928">
    <property type="entry name" value="DEXDc_SecA"/>
    <property type="match status" value="1"/>
</dbReference>
<dbReference type="CDD" id="cd18803">
    <property type="entry name" value="SF2_C_secA"/>
    <property type="match status" value="1"/>
</dbReference>
<dbReference type="FunFam" id="3.90.1440.10:FF:000003">
    <property type="entry name" value="Preprotein translocase SecA subunit"/>
    <property type="match status" value="1"/>
</dbReference>
<dbReference type="FunFam" id="3.40.50.300:FF:000429">
    <property type="entry name" value="Preprotein translocase subunit SecA"/>
    <property type="match status" value="1"/>
</dbReference>
<dbReference type="FunFam" id="1.10.3060.10:FF:000003">
    <property type="entry name" value="Protein translocase subunit SecA"/>
    <property type="match status" value="1"/>
</dbReference>
<dbReference type="FunFam" id="3.40.50.300:FF:000334">
    <property type="entry name" value="Protein translocase subunit SecA"/>
    <property type="match status" value="1"/>
</dbReference>
<dbReference type="Gene3D" id="1.10.3060.10">
    <property type="entry name" value="Helical scaffold and wing domains of SecA"/>
    <property type="match status" value="1"/>
</dbReference>
<dbReference type="Gene3D" id="3.40.50.300">
    <property type="entry name" value="P-loop containing nucleotide triphosphate hydrolases"/>
    <property type="match status" value="2"/>
</dbReference>
<dbReference type="Gene3D" id="3.90.1440.10">
    <property type="entry name" value="SecA, preprotein cross-linking domain"/>
    <property type="match status" value="1"/>
</dbReference>
<dbReference type="HAMAP" id="MF_01382">
    <property type="entry name" value="SecA"/>
    <property type="match status" value="1"/>
</dbReference>
<dbReference type="InterPro" id="IPR014001">
    <property type="entry name" value="Helicase_ATP-bd"/>
</dbReference>
<dbReference type="InterPro" id="IPR027417">
    <property type="entry name" value="P-loop_NTPase"/>
</dbReference>
<dbReference type="InterPro" id="IPR000185">
    <property type="entry name" value="SecA"/>
</dbReference>
<dbReference type="InterPro" id="IPR020937">
    <property type="entry name" value="SecA_CS"/>
</dbReference>
<dbReference type="InterPro" id="IPR011115">
    <property type="entry name" value="SecA_DEAD"/>
</dbReference>
<dbReference type="InterPro" id="IPR014018">
    <property type="entry name" value="SecA_motor_DEAD"/>
</dbReference>
<dbReference type="InterPro" id="IPR011130">
    <property type="entry name" value="SecA_preprotein_X-link_dom"/>
</dbReference>
<dbReference type="InterPro" id="IPR044722">
    <property type="entry name" value="SecA_SF2_C"/>
</dbReference>
<dbReference type="InterPro" id="IPR011116">
    <property type="entry name" value="SecA_Wing/Scaffold"/>
</dbReference>
<dbReference type="InterPro" id="IPR036266">
    <property type="entry name" value="SecA_Wing/Scaffold_sf"/>
</dbReference>
<dbReference type="InterPro" id="IPR036670">
    <property type="entry name" value="SecA_X-link_sf"/>
</dbReference>
<dbReference type="NCBIfam" id="TIGR00963">
    <property type="entry name" value="secA"/>
    <property type="match status" value="1"/>
</dbReference>
<dbReference type="PANTHER" id="PTHR30612:SF0">
    <property type="entry name" value="CHLOROPLAST PROTEIN-TRANSPORTING ATPASE"/>
    <property type="match status" value="1"/>
</dbReference>
<dbReference type="PANTHER" id="PTHR30612">
    <property type="entry name" value="SECA INNER MEMBRANE COMPONENT OF SEC PROTEIN SECRETION SYSTEM"/>
    <property type="match status" value="1"/>
</dbReference>
<dbReference type="Pfam" id="PF21090">
    <property type="entry name" value="P-loop_SecA"/>
    <property type="match status" value="1"/>
</dbReference>
<dbReference type="Pfam" id="PF07517">
    <property type="entry name" value="SecA_DEAD"/>
    <property type="match status" value="1"/>
</dbReference>
<dbReference type="Pfam" id="PF01043">
    <property type="entry name" value="SecA_PP_bind"/>
    <property type="match status" value="1"/>
</dbReference>
<dbReference type="Pfam" id="PF07516">
    <property type="entry name" value="SecA_SW"/>
    <property type="match status" value="1"/>
</dbReference>
<dbReference type="PRINTS" id="PR00906">
    <property type="entry name" value="SECA"/>
</dbReference>
<dbReference type="SMART" id="SM00957">
    <property type="entry name" value="SecA_DEAD"/>
    <property type="match status" value="1"/>
</dbReference>
<dbReference type="SMART" id="SM00958">
    <property type="entry name" value="SecA_PP_bind"/>
    <property type="match status" value="1"/>
</dbReference>
<dbReference type="SUPFAM" id="SSF81886">
    <property type="entry name" value="Helical scaffold and wing domains of SecA"/>
    <property type="match status" value="1"/>
</dbReference>
<dbReference type="SUPFAM" id="SSF52540">
    <property type="entry name" value="P-loop containing nucleoside triphosphate hydrolases"/>
    <property type="match status" value="2"/>
</dbReference>
<dbReference type="SUPFAM" id="SSF81767">
    <property type="entry name" value="Pre-protein crosslinking domain of SecA"/>
    <property type="match status" value="1"/>
</dbReference>
<dbReference type="PROSITE" id="PS01312">
    <property type="entry name" value="SECA"/>
    <property type="match status" value="1"/>
</dbReference>
<dbReference type="PROSITE" id="PS51196">
    <property type="entry name" value="SECA_MOTOR_DEAD"/>
    <property type="match status" value="1"/>
</dbReference>
<feature type="chain" id="PRO_0000318474" description="Protein translocase subunit SecA">
    <location>
        <begin position="1"/>
        <end position="955"/>
    </location>
</feature>
<feature type="region of interest" description="Disordered" evidence="2">
    <location>
        <begin position="537"/>
        <end position="571"/>
    </location>
</feature>
<feature type="compositionally biased region" description="Low complexity" evidence="2">
    <location>
        <begin position="557"/>
        <end position="571"/>
    </location>
</feature>
<feature type="binding site" evidence="1">
    <location>
        <position position="90"/>
    </location>
    <ligand>
        <name>ATP</name>
        <dbReference type="ChEBI" id="CHEBI:30616"/>
    </ligand>
</feature>
<feature type="binding site" evidence="1">
    <location>
        <begin position="108"/>
        <end position="112"/>
    </location>
    <ligand>
        <name>ATP</name>
        <dbReference type="ChEBI" id="CHEBI:30616"/>
    </ligand>
</feature>
<feature type="binding site" evidence="1">
    <location>
        <position position="509"/>
    </location>
    <ligand>
        <name>ATP</name>
        <dbReference type="ChEBI" id="CHEBI:30616"/>
    </ligand>
</feature>
<reference key="1">
    <citation type="submission" date="2006-05" db="EMBL/GenBank/DDBJ databases">
        <authorList>
            <consortium name="Genoscope"/>
        </authorList>
    </citation>
    <scope>NUCLEOTIDE SEQUENCE [LARGE SCALE GENOMIC DNA]</scope>
    <source>
        <strain>WH7803</strain>
    </source>
</reference>
<evidence type="ECO:0000255" key="1">
    <source>
        <dbReference type="HAMAP-Rule" id="MF_01382"/>
    </source>
</evidence>
<evidence type="ECO:0000256" key="2">
    <source>
        <dbReference type="SAM" id="MobiDB-lite"/>
    </source>
</evidence>
<sequence length="955" mass="107285">MLKLLLGDPNARKLKRYQPIVSDINLLEEEVSPLSDDDLRRRTAEFRQRLDNAGSLDQQRPVLDELLPEAFAVVREAGKRVLGMRHFDVQLIGGMVLHEGQIAEMKTGEGKTLVATLPSFLNALTGRGVHVVTVNDYLARRDAEWMGQVHRFLGLSVGLIQQDMTPAERRRNYGCDITYATNSELGFDYLRDNMAADINEVVQREFQYCVIDEVDSILIDEARTPLIISGQVERPQEKYQKAAEVAAALTRAAEMGKDGIDPEGDYEVDEKQRSCTLTDEGFAKAEQMIGVADLYDPQDPWAHYITNALKAKDLFTRDVNYIVRDGEAVIVDEFTGRVMPGRRWSDGQHQAIEAKEALAIQPETQTLASITYQNFFLLYPRLAGMTGTAKTEETEFEKTYKLETTIVPTNRVRARQDWVDQVYKTEEAKWRAVAKETAEVHQQGRPVLVGTTSVEKSELLSALLAEEDIPHNLLNAKPENVEREAEIVAQAGRSGAVTIATNMAGRGTDIILGGNSDYMARLKLREVLLSRLVRPEEGHRPPVPLQRSGAEGGGGFAAKAAPASGPHGHAPSEARAIGSLYPCQLTEDTDQALADLAKDLVKAWGDRALTVIELEDHIATAAEKAPTDDPAIAALRAAIARVKGEYDDVVKQEEQRVREAGGLHVIGTERHESRRVDNQLRGRAGRQGDPGSTRFFLSLGDNLLRIFGGDRVAGLMNAFRVEEDMPIESGMLTRSLEGAQKKVETYYYDIRKQVFEYDEVMNNQRKAVYSERRRVLEGRELKKQVVGYGERTMNEIVEAYVNPDLPPEEWDVTQLVSKVQEFVYLLDDLQADQLQGLSMDELKAFLQEQLRNAYDLKEGQIEDQRPGLMREAERFFILQQIDTLWREHLQSMDALRESVGLRGYGQKDPLIEYKNEGYDMFLDMMTNMRRNVIYSMFMFQPAPPAGQSAGQRTTA</sequence>
<proteinExistence type="inferred from homology"/>
<comment type="function">
    <text evidence="1">Part of the Sec protein translocase complex. Interacts with the SecYEG preprotein conducting channel. Has a central role in coupling the hydrolysis of ATP to the transfer of proteins into and across the cell membrane, serving as an ATP-driven molecular motor driving the stepwise translocation of polypeptide chains across the membrane.</text>
</comment>
<comment type="function">
    <text evidence="1">Probably participates in protein translocation into and across both the cytoplasmic and thylakoid membranes in cyanobacterial cells.</text>
</comment>
<comment type="catalytic activity">
    <reaction evidence="1">
        <text>ATP + H2O + cellular proteinSide 1 = ADP + phosphate + cellular proteinSide 2.</text>
        <dbReference type="EC" id="7.4.2.8"/>
    </reaction>
</comment>
<comment type="subunit">
    <text evidence="1">Monomer and homodimer. Part of the essential Sec protein translocation apparatus which comprises SecA, SecYEG and auxiliary proteins SecDF. Other proteins may also be involved.</text>
</comment>
<comment type="subcellular location">
    <subcellularLocation>
        <location evidence="1">Cell inner membrane</location>
        <topology evidence="1">Peripheral membrane protein</topology>
        <orientation evidence="1">Cytoplasmic side</orientation>
    </subcellularLocation>
    <subcellularLocation>
        <location evidence="1">Cellular thylakoid membrane</location>
        <topology evidence="1">Peripheral membrane protein</topology>
        <orientation evidence="1">Cytoplasmic side</orientation>
    </subcellularLocation>
    <subcellularLocation>
        <location evidence="1">Cytoplasm</location>
    </subcellularLocation>
</comment>
<comment type="similarity">
    <text evidence="1">Belongs to the SecA family.</text>
</comment>